<organism>
    <name type="scientific">Geobacillus stearothermophilus</name>
    <name type="common">Bacillus stearothermophilus</name>
    <dbReference type="NCBI Taxonomy" id="1422"/>
    <lineage>
        <taxon>Bacteria</taxon>
        <taxon>Bacillati</taxon>
        <taxon>Bacillota</taxon>
        <taxon>Bacilli</taxon>
        <taxon>Bacillales</taxon>
        <taxon>Anoxybacillaceae</taxon>
        <taxon>Geobacillus</taxon>
    </lineage>
</organism>
<dbReference type="EC" id="2.7.3.9" evidence="1"/>
<dbReference type="EMBL" id="U12340">
    <property type="protein sequence ID" value="AAA86049.1"/>
    <property type="molecule type" value="Genomic_DNA"/>
</dbReference>
<dbReference type="SMR" id="P42014"/>
<dbReference type="GO" id="GO:0005737">
    <property type="term" value="C:cytoplasm"/>
    <property type="evidence" value="ECO:0007669"/>
    <property type="project" value="UniProtKB-SubCell"/>
</dbReference>
<dbReference type="GO" id="GO:0016301">
    <property type="term" value="F:kinase activity"/>
    <property type="evidence" value="ECO:0007669"/>
    <property type="project" value="UniProtKB-KW"/>
</dbReference>
<dbReference type="GO" id="GO:0046872">
    <property type="term" value="F:metal ion binding"/>
    <property type="evidence" value="ECO:0007669"/>
    <property type="project" value="UniProtKB-KW"/>
</dbReference>
<dbReference type="GO" id="GO:0008965">
    <property type="term" value="F:phosphoenolpyruvate-protein phosphotransferase activity"/>
    <property type="evidence" value="ECO:0007669"/>
    <property type="project" value="UniProtKB-EC"/>
</dbReference>
<dbReference type="GO" id="GO:0009401">
    <property type="term" value="P:phosphoenolpyruvate-dependent sugar phosphotransferase system"/>
    <property type="evidence" value="ECO:0007669"/>
    <property type="project" value="UniProtKB-KW"/>
</dbReference>
<dbReference type="FunFam" id="1.10.274.10:FF:000001">
    <property type="entry name" value="Phosphoenolpyruvate-protein phosphotransferase"/>
    <property type="match status" value="1"/>
</dbReference>
<dbReference type="FunFam" id="3.20.20.60:FF:000007">
    <property type="entry name" value="Phosphoenolpyruvate-protein phosphotransferase"/>
    <property type="match status" value="1"/>
</dbReference>
<dbReference type="FunFam" id="3.50.30.10:FF:000001">
    <property type="entry name" value="Phosphoenolpyruvate-protein phosphotransferase"/>
    <property type="match status" value="1"/>
</dbReference>
<dbReference type="Gene3D" id="3.20.20.60">
    <property type="entry name" value="Phosphoenolpyruvate-binding domains"/>
    <property type="match status" value="1"/>
</dbReference>
<dbReference type="Gene3D" id="3.50.30.10">
    <property type="entry name" value="Phosphohistidine domain"/>
    <property type="match status" value="1"/>
</dbReference>
<dbReference type="Gene3D" id="1.10.274.10">
    <property type="entry name" value="PtsI, HPr-binding domain"/>
    <property type="match status" value="1"/>
</dbReference>
<dbReference type="InterPro" id="IPR008279">
    <property type="entry name" value="PEP-util_enz_mobile_dom"/>
</dbReference>
<dbReference type="InterPro" id="IPR050499">
    <property type="entry name" value="PEP-utilizing_PTS_enzyme"/>
</dbReference>
<dbReference type="InterPro" id="IPR018274">
    <property type="entry name" value="PEP_util_AS"/>
</dbReference>
<dbReference type="InterPro" id="IPR000121">
    <property type="entry name" value="PEP_util_C"/>
</dbReference>
<dbReference type="InterPro" id="IPR023151">
    <property type="entry name" value="PEP_util_CS"/>
</dbReference>
<dbReference type="InterPro" id="IPR036637">
    <property type="entry name" value="Phosphohistidine_dom_sf"/>
</dbReference>
<dbReference type="InterPro" id="IPR024692">
    <property type="entry name" value="PTS_EI"/>
</dbReference>
<dbReference type="InterPro" id="IPR006318">
    <property type="entry name" value="PTS_EI-like"/>
</dbReference>
<dbReference type="InterPro" id="IPR008731">
    <property type="entry name" value="PTS_EIN"/>
</dbReference>
<dbReference type="InterPro" id="IPR036618">
    <property type="entry name" value="PtsI_HPr-bd_sf"/>
</dbReference>
<dbReference type="InterPro" id="IPR015813">
    <property type="entry name" value="Pyrv/PenolPyrv_kinase-like_dom"/>
</dbReference>
<dbReference type="InterPro" id="IPR040442">
    <property type="entry name" value="Pyrv_kinase-like_dom_sf"/>
</dbReference>
<dbReference type="NCBIfam" id="TIGR01417">
    <property type="entry name" value="PTS_I_fam"/>
    <property type="match status" value="1"/>
</dbReference>
<dbReference type="PANTHER" id="PTHR46244">
    <property type="entry name" value="PHOSPHOENOLPYRUVATE-PROTEIN PHOSPHOTRANSFERASE"/>
    <property type="match status" value="1"/>
</dbReference>
<dbReference type="PANTHER" id="PTHR46244:SF3">
    <property type="entry name" value="PHOSPHOENOLPYRUVATE-PROTEIN PHOSPHOTRANSFERASE"/>
    <property type="match status" value="1"/>
</dbReference>
<dbReference type="Pfam" id="PF05524">
    <property type="entry name" value="PEP-utilisers_N"/>
    <property type="match status" value="1"/>
</dbReference>
<dbReference type="Pfam" id="PF00391">
    <property type="entry name" value="PEP-utilizers"/>
    <property type="match status" value="1"/>
</dbReference>
<dbReference type="Pfam" id="PF02896">
    <property type="entry name" value="PEP-utilizers_C"/>
    <property type="match status" value="1"/>
</dbReference>
<dbReference type="PIRSF" id="PIRSF000732">
    <property type="entry name" value="PTS_enzyme_I"/>
    <property type="match status" value="1"/>
</dbReference>
<dbReference type="PRINTS" id="PR01736">
    <property type="entry name" value="PHPHTRNFRASE"/>
</dbReference>
<dbReference type="SUPFAM" id="SSF47831">
    <property type="entry name" value="Enzyme I of the PEP:sugar phosphotransferase system HPr-binding (sub)domain"/>
    <property type="match status" value="1"/>
</dbReference>
<dbReference type="SUPFAM" id="SSF51621">
    <property type="entry name" value="Phosphoenolpyruvate/pyruvate domain"/>
    <property type="match status" value="1"/>
</dbReference>
<dbReference type="SUPFAM" id="SSF52009">
    <property type="entry name" value="Phosphohistidine domain"/>
    <property type="match status" value="1"/>
</dbReference>
<dbReference type="PROSITE" id="PS00742">
    <property type="entry name" value="PEP_ENZYMES_2"/>
    <property type="match status" value="1"/>
</dbReference>
<dbReference type="PROSITE" id="PS00370">
    <property type="entry name" value="PEP_ENZYMES_PHOS_SITE"/>
    <property type="match status" value="1"/>
</dbReference>
<sequence length="578" mass="63471">MGNAIREKTIHGIAASSGIAIAKAYRLETPDLAAEKRTVADVEAEIARLEAAVAKAKEELEAIKQHALEKLGEDKAAIFAAHLLVLDDPELLNPIKEKIQTERVNAEYALDETALFFISMFEAMDNEYMKERAADIRDVTKRVLAHLLGVTISNPSLISEEVVIIAEDLTPSDTAQLNRQYVKGFATDIGGRTSHSAIMARSLEIPAVVGTKTVTAEVKNGDIVIVDGLDGQVIINPSPELLAQYEQKRARYEAQKAEWAKLVHEATVTADGIHVELAANIGTPDDVKGALANGAEGIGLYRTEFLYMGRSELPTEDEQFVAYKTVLEQMNGKPVVVRTLDIGGDKELPYLQLPKEMNPFLGFRAIRLCLEMQDMFRTQLRALLRASVYGNLKIMFPMIATLDEFRQAKAILLEEKEALLRQGVAVADGIEVGMMVEIPAAAVMADQFAKEVDFFSIGTNDLIQYTMAADRMNERVAYLYQPYNPAILRLISHVIDAAHREGKWVGMCGEMAGDPIAIPILLALGLDEFSMSATSILPARAQLKKLAKEEAARIKETVLSLGTAEEVVSFVKRTFSLA</sequence>
<gene>
    <name type="primary">ptsI</name>
</gene>
<reference key="1">
    <citation type="journal article" date="1995" name="Microbiology">
        <title>Discovery of a ptsHI operon, which includes a third gene (ptsT), in the thermophile Bacillus stearothermophilus.</title>
        <authorList>
            <person name="Lai X."/>
            <person name="Ingram L.O."/>
        </authorList>
    </citation>
    <scope>NUCLEOTIDE SEQUENCE [GENOMIC DNA]</scope>
    <source>
        <strain>XL-65-6</strain>
    </source>
</reference>
<keyword id="KW-0963">Cytoplasm</keyword>
<keyword id="KW-0418">Kinase</keyword>
<keyword id="KW-0460">Magnesium</keyword>
<keyword id="KW-0479">Metal-binding</keyword>
<keyword id="KW-0598">Phosphotransferase system</keyword>
<keyword id="KW-0762">Sugar transport</keyword>
<keyword id="KW-0808">Transferase</keyword>
<keyword id="KW-0813">Transport</keyword>
<accession>P42014</accession>
<feature type="chain" id="PRO_0000147058" description="Phosphoenolpyruvate-protein phosphotransferase">
    <location>
        <begin position="1"/>
        <end position="578"/>
    </location>
</feature>
<feature type="active site" description="Tele-phosphohistidine intermediate" evidence="1">
    <location>
        <position position="195"/>
    </location>
</feature>
<feature type="active site" description="Proton donor" evidence="1">
    <location>
        <position position="508"/>
    </location>
</feature>
<feature type="binding site" evidence="2">
    <location>
        <position position="302"/>
    </location>
    <ligand>
        <name>phosphoenolpyruvate</name>
        <dbReference type="ChEBI" id="CHEBI:58702"/>
    </ligand>
</feature>
<feature type="binding site" evidence="1">
    <location>
        <position position="338"/>
    </location>
    <ligand>
        <name>phosphoenolpyruvate</name>
        <dbReference type="ChEBI" id="CHEBI:58702"/>
    </ligand>
</feature>
<feature type="binding site" evidence="1">
    <location>
        <position position="437"/>
    </location>
    <ligand>
        <name>Mg(2+)</name>
        <dbReference type="ChEBI" id="CHEBI:18420"/>
    </ligand>
</feature>
<feature type="binding site" evidence="1">
    <location>
        <begin position="460"/>
        <end position="461"/>
    </location>
    <ligand>
        <name>phosphoenolpyruvate</name>
        <dbReference type="ChEBI" id="CHEBI:58702"/>
    </ligand>
</feature>
<feature type="binding site" evidence="1">
    <location>
        <position position="461"/>
    </location>
    <ligand>
        <name>Mg(2+)</name>
        <dbReference type="ChEBI" id="CHEBI:18420"/>
    </ligand>
</feature>
<feature type="binding site" evidence="2">
    <location>
        <position position="471"/>
    </location>
    <ligand>
        <name>phosphoenolpyruvate</name>
        <dbReference type="ChEBI" id="CHEBI:58702"/>
    </ligand>
</feature>
<name>PT1_GEOSE</name>
<comment type="function">
    <text evidence="1">General (non sugar-specific) component of the phosphoenolpyruvate-dependent sugar phosphotransferase system (sugar PTS). This major carbohydrate active-transport system catalyzes the phosphorylation of incoming sugar substrates concomitantly with their translocation across the cell membrane. Enzyme I transfers the phosphoryl group from phosphoenolpyruvate (PEP) to the phosphoryl carrier protein (HPr).</text>
</comment>
<comment type="catalytic activity">
    <reaction evidence="1">
        <text>L-histidyl-[protein] + phosphoenolpyruvate = N(pros)-phospho-L-histidyl-[protein] + pyruvate</text>
        <dbReference type="Rhea" id="RHEA:23880"/>
        <dbReference type="Rhea" id="RHEA-COMP:9745"/>
        <dbReference type="Rhea" id="RHEA-COMP:9746"/>
        <dbReference type="ChEBI" id="CHEBI:15361"/>
        <dbReference type="ChEBI" id="CHEBI:29979"/>
        <dbReference type="ChEBI" id="CHEBI:58702"/>
        <dbReference type="ChEBI" id="CHEBI:64837"/>
        <dbReference type="EC" id="2.7.3.9"/>
    </reaction>
</comment>
<comment type="cofactor">
    <cofactor evidence="1">
        <name>Mg(2+)</name>
        <dbReference type="ChEBI" id="CHEBI:18420"/>
    </cofactor>
</comment>
<comment type="subunit">
    <text evidence="1">Homodimer.</text>
</comment>
<comment type="subcellular location">
    <subcellularLocation>
        <location evidence="3">Cytoplasm</location>
    </subcellularLocation>
</comment>
<comment type="domain">
    <text evidence="1">The N-terminal domain contains the HPr binding site, the central domain the pyrophosphate/phosphate carrier histidine, and the C-terminal domain the pyruvate binding site.</text>
</comment>
<comment type="miscellaneous">
    <text evidence="1">The reaction takes place in three steps, mediated by a phosphocarrier histidine residue located on the surface of the central domain. The two first partial reactions are catalyzed at an active site located on the N-terminal domain, and the third partial reaction is catalyzed at an active site located on the C-terminal domain. For catalytic turnover, the central domain swivels from the concave surface of the N-terminal domain to that of the C-terminal domain.</text>
</comment>
<comment type="similarity">
    <text evidence="3">Belongs to the PEP-utilizing enzyme family.</text>
</comment>
<protein>
    <recommendedName>
        <fullName evidence="1">Phosphoenolpyruvate-protein phosphotransferase</fullName>
        <ecNumber evidence="1">2.7.3.9</ecNumber>
    </recommendedName>
    <alternativeName>
        <fullName evidence="1">Phosphotransferase system, enzyme I</fullName>
    </alternativeName>
</protein>
<evidence type="ECO:0000250" key="1">
    <source>
        <dbReference type="UniProtKB" id="P08839"/>
    </source>
</evidence>
<evidence type="ECO:0000250" key="2">
    <source>
        <dbReference type="UniProtKB" id="P23533"/>
    </source>
</evidence>
<evidence type="ECO:0000305" key="3"/>
<proteinExistence type="inferred from homology"/>